<feature type="transit peptide" description="Chloroplast" evidence="2">
    <location>
        <begin position="1"/>
        <end position="56"/>
    </location>
</feature>
<feature type="chain" id="PRO_0000240251" description="Phosphoglucan, water dikinase, chloroplastic">
    <location>
        <begin position="57"/>
        <end position="1206"/>
    </location>
</feature>
<feature type="domain" description="CBM20" evidence="3">
    <location>
        <begin position="67"/>
        <end position="168"/>
    </location>
</feature>
<feature type="region of interest" description="Disordered" evidence="4">
    <location>
        <begin position="1"/>
        <end position="20"/>
    </location>
</feature>
<feature type="region of interest" description="Disordered" evidence="4">
    <location>
        <begin position="52"/>
        <end position="71"/>
    </location>
</feature>
<feature type="active site" description="Tele-phosphohistidine intermediate" evidence="1">
    <location>
        <position position="776"/>
    </location>
</feature>
<evidence type="ECO:0000250" key="1"/>
<evidence type="ECO:0000255" key="2"/>
<evidence type="ECO:0000255" key="3">
    <source>
        <dbReference type="PROSITE-ProRule" id="PRU00594"/>
    </source>
</evidence>
<evidence type="ECO:0000256" key="4">
    <source>
        <dbReference type="SAM" id="MobiDB-lite"/>
    </source>
</evidence>
<evidence type="ECO:0000305" key="5"/>
<sequence>MTSLRPLETSLSIGGRPRRGLVLPPPGVGAGVLLRRGAMALPGRRGFACRGRSAASAAERTKEKKRRDSSKQPLVHLQVCLEHQVKFGEHVGIIGSTKELGSWEEQVELEWTTNGWVCQLKLPGETLVEFKFVIFLVGGKDKIWEDGNNRVVELPKDGKFDIVCHWNRTEEPLELLGTPKFELVGEAEKNTGEDASASVTFAPEKVQDISVVENGDPAPEAESSKFGGQWQGSKTVFMRSNEHLNKEADRMWDTTGLDGIALKLVEGDKASRNWWRKLEVVRGILSESFDDQSRLGALVYSAIYLKWIYTGQISCFEDGGHHRPNKHAEISRQIFRELEMMYYGKTTSAKDVLVIRKIHPFLPSFKSEFTASVPLTRIRDIAHRNDIPHDLKQEIKHTIQNKLHRNAGPEDLIATEVMLARITKTPGEYSETFVEQFTIFYSELKDFFNAGSLFEQLESIKESLNESGLEVLSSFVETKRSLDQVDHAEDLDKNDTIQILMTTLQSLSSLRSVLMKGLESGLRNDAPDNAIAMRQKWRLCEISLEDYSFVLLSRFINTLEALGGSASLAKDVARNTTLWDTTLDALVIGINQVSFSGWKTDECIAIGNEILSWKQKGLSESEGCEDGKYIWSLRLKATLDRARRLTEEYSEALLSIFPEKVMVIGKALGIPDNSVRTYTEAEIRAGIVFQVSKLCTVLQKAIREVLGSTGWDVLVPGVAHGTLMRVERILPGSLPSSVKEPVVLIVDKADGDEEVKAAGDNIVGVILLQELPHLSHLGVRARQENVVFVTCEYDDTVTDVYLLEGKYIRLEASSINVNLSIVSEKNDNAVSTEPNSTGNPFQQKLQNEFSLPSDIEMPLQMSKQKSKSGVNGSFAALELSEASVESAGAKAAACRTLSVLASLSNKVYSDQGVPAAFRVPSGAVIPFGSMEDALKKSGSLESFTSLLEKIETAKVENGEVDSLALELQAIISHLSPPEETIIFLKRIFPQDVRLIVRSSANVEDLAGMSAAGLYDSIPNVSLMDPCAFGAAVGKVWASLYTRRAILSRRAAGVYQRDATMAVLVQEILQPDLSFVLHTVCPADHDPKVVQAEVAPGLGETLASGTRGTPWRLSCNKFDGKVATLAFSNFSEEMVVHNSGPANGEVIRLTVDYSKKPLSVDTTFRKQFGQRLAAIGQYLEQKFGSAQDVEGCLVGKDIFIVQSRPQP</sequence>
<proteinExistence type="inferred from homology"/>
<reference key="1">
    <citation type="journal article" date="2005" name="BMC Biol.">
        <title>The sequence of rice chromosomes 11 and 12, rich in disease resistance genes and recent gene duplications.</title>
        <authorList>
            <consortium name="The rice chromosomes 11 and 12 sequencing consortia"/>
        </authorList>
    </citation>
    <scope>NUCLEOTIDE SEQUENCE [LARGE SCALE GENOMIC DNA]</scope>
    <source>
        <strain>cv. Nipponbare</strain>
    </source>
</reference>
<reference key="2">
    <citation type="journal article" date="2005" name="Nature">
        <title>The map-based sequence of the rice genome.</title>
        <authorList>
            <consortium name="International rice genome sequencing project (IRGSP)"/>
        </authorList>
    </citation>
    <scope>NUCLEOTIDE SEQUENCE [LARGE SCALE GENOMIC DNA]</scope>
    <source>
        <strain>cv. Nipponbare</strain>
    </source>
</reference>
<reference key="3">
    <citation type="journal article" date="2008" name="Nucleic Acids Res.">
        <title>The rice annotation project database (RAP-DB): 2008 update.</title>
        <authorList>
            <consortium name="The rice annotation project (RAP)"/>
        </authorList>
    </citation>
    <scope>GENOME REANNOTATION</scope>
    <source>
        <strain>cv. Nipponbare</strain>
    </source>
</reference>
<reference key="4">
    <citation type="journal article" date="2013" name="Rice">
        <title>Improvement of the Oryza sativa Nipponbare reference genome using next generation sequence and optical map data.</title>
        <authorList>
            <person name="Kawahara Y."/>
            <person name="de la Bastide M."/>
            <person name="Hamilton J.P."/>
            <person name="Kanamori H."/>
            <person name="McCombie W.R."/>
            <person name="Ouyang S."/>
            <person name="Schwartz D.C."/>
            <person name="Tanaka T."/>
            <person name="Wu J."/>
            <person name="Zhou S."/>
            <person name="Childs K.L."/>
            <person name="Davidson R.M."/>
            <person name="Lin H."/>
            <person name="Quesada-Ocampo L."/>
            <person name="Vaillancourt B."/>
            <person name="Sakai H."/>
            <person name="Lee S.S."/>
            <person name="Kim J."/>
            <person name="Numa H."/>
            <person name="Itoh T."/>
            <person name="Buell C.R."/>
            <person name="Matsumoto T."/>
        </authorList>
    </citation>
    <scope>GENOME REANNOTATION</scope>
    <source>
        <strain>cv. Nipponbare</strain>
    </source>
</reference>
<accession>Q2QTC2</accession>
<accession>Q0INT3</accession>
<comment type="function">
    <text evidence="1">Mediates the incorporation of phosphate into starch-like phospho-alpha-glucan, mostly at the C-3 position of glucose units. May be required for starch degradation, suggesting that the phosphate content of starch regulates its degradability (By similarity).</text>
</comment>
<comment type="catalytic activity">
    <reaction>
        <text>[(1-&gt;4)-6-phospho-alpha-D-glucosyl](n) + n ATP + n H2O = [(1-&gt;4)-3,6-bisphospho-alpha-D-glucosyl](n) + n AMP + n phosphate + 2n H(+)</text>
        <dbReference type="Rhea" id="RHEA:10256"/>
        <dbReference type="Rhea" id="RHEA-COMP:12983"/>
        <dbReference type="Rhea" id="RHEA-COMP:14598"/>
        <dbReference type="ChEBI" id="CHEBI:15377"/>
        <dbReference type="ChEBI" id="CHEBI:15378"/>
        <dbReference type="ChEBI" id="CHEBI:30616"/>
        <dbReference type="ChEBI" id="CHEBI:43474"/>
        <dbReference type="ChEBI" id="CHEBI:134068"/>
        <dbReference type="ChEBI" id="CHEBI:140561"/>
        <dbReference type="ChEBI" id="CHEBI:456215"/>
        <dbReference type="EC" id="2.7.9.5"/>
    </reaction>
</comment>
<comment type="cofactor">
    <cofactor evidence="1">
        <name>Mg(2+)</name>
        <dbReference type="ChEBI" id="CHEBI:18420"/>
    </cofactor>
</comment>
<comment type="subunit">
    <text evidence="1">Homodimer.</text>
</comment>
<comment type="subcellular location">
    <subcellularLocation>
        <location>Plastid</location>
        <location>Chloroplast</location>
    </subcellularLocation>
    <text evidence="1">Starch granules during starch mobilization in darkness.</text>
</comment>
<comment type="domain">
    <text evidence="1">The N-terminal domain contains the alpha-glucan binding site, the central domain the pyrophosphate/phosphate carrier histidine, and the C-terminal domain the ATP binding site.</text>
</comment>
<comment type="miscellaneous">
    <text evidence="1">The reaction takes place in three steps, mediated by a phosphocarrier histidine residue located on the surface of the central domain. The two first partial reactions are catalyzed at an active site located on the C-terminal domain, and the third partial reaction is catalyzed at an active site located on the N-terminal domain. For catalytic turnover, the central domain swivels from the concave surface of the C-terminal domain to that of the N-terminal domain (By similarity).</text>
</comment>
<comment type="similarity">
    <text evidence="5">Belongs to the PEP-utilizing enzyme family.</text>
</comment>
<gene>
    <name type="primary">GWD3</name>
    <name type="synonym">PWD</name>
    <name type="ordered locus">Os12g0297500</name>
    <name type="ordered locus">LOC_Os12g20150</name>
</gene>
<keyword id="KW-0067">ATP-binding</keyword>
<keyword id="KW-0119">Carbohydrate metabolism</keyword>
<keyword id="KW-0150">Chloroplast</keyword>
<keyword id="KW-0418">Kinase</keyword>
<keyword id="KW-0460">Magnesium</keyword>
<keyword id="KW-0479">Metal-binding</keyword>
<keyword id="KW-0547">Nucleotide-binding</keyword>
<keyword id="KW-0934">Plastid</keyword>
<keyword id="KW-1185">Reference proteome</keyword>
<keyword id="KW-0808">Transferase</keyword>
<keyword id="KW-0809">Transit peptide</keyword>
<organism>
    <name type="scientific">Oryza sativa subsp. japonica</name>
    <name type="common">Rice</name>
    <dbReference type="NCBI Taxonomy" id="39947"/>
    <lineage>
        <taxon>Eukaryota</taxon>
        <taxon>Viridiplantae</taxon>
        <taxon>Streptophyta</taxon>
        <taxon>Embryophyta</taxon>
        <taxon>Tracheophyta</taxon>
        <taxon>Spermatophyta</taxon>
        <taxon>Magnoliopsida</taxon>
        <taxon>Liliopsida</taxon>
        <taxon>Poales</taxon>
        <taxon>Poaceae</taxon>
        <taxon>BOP clade</taxon>
        <taxon>Oryzoideae</taxon>
        <taxon>Oryzeae</taxon>
        <taxon>Oryzinae</taxon>
        <taxon>Oryza</taxon>
        <taxon>Oryza sativa</taxon>
    </lineage>
</organism>
<protein>
    <recommendedName>
        <fullName>Phosphoglucan, water dikinase, chloroplastic</fullName>
        <ecNumber>2.7.9.5</ecNumber>
    </recommendedName>
</protein>
<dbReference type="EC" id="2.7.9.5"/>
<dbReference type="EMBL" id="DP000011">
    <property type="protein sequence ID" value="ABA97816.2"/>
    <property type="molecule type" value="Genomic_DNA"/>
</dbReference>
<dbReference type="EMBL" id="AP008218">
    <property type="protein sequence ID" value="BAF29632.1"/>
    <property type="molecule type" value="Genomic_DNA"/>
</dbReference>
<dbReference type="EMBL" id="AP014968">
    <property type="protein sequence ID" value="BAT16806.1"/>
    <property type="molecule type" value="Genomic_DNA"/>
</dbReference>
<dbReference type="RefSeq" id="XP_015620009.1">
    <property type="nucleotide sequence ID" value="XM_015764523.1"/>
</dbReference>
<dbReference type="SMR" id="Q2QTC2"/>
<dbReference type="BioGRID" id="821065">
    <property type="interactions" value="1"/>
</dbReference>
<dbReference type="FunCoup" id="Q2QTC2">
    <property type="interactions" value="703"/>
</dbReference>
<dbReference type="STRING" id="39947.Q2QTC2"/>
<dbReference type="CAZy" id="CBM20">
    <property type="family name" value="Carbohydrate-Binding Module Family 20"/>
</dbReference>
<dbReference type="PaxDb" id="39947-Q2QTC2"/>
<dbReference type="EnsemblPlants" id="Os12t0297500-01">
    <property type="protein sequence ID" value="Os12t0297500-01"/>
    <property type="gene ID" value="Os12g0297500"/>
</dbReference>
<dbReference type="Gramene" id="Os12t0297500-01">
    <property type="protein sequence ID" value="Os12t0297500-01"/>
    <property type="gene ID" value="Os12g0297500"/>
</dbReference>
<dbReference type="KEGG" id="dosa:Os12g0297500"/>
<dbReference type="eggNOG" id="ENOG502QS3J">
    <property type="taxonomic scope" value="Eukaryota"/>
</dbReference>
<dbReference type="HOGENOM" id="CLU_012115_0_0_1"/>
<dbReference type="InParanoid" id="Q2QTC2"/>
<dbReference type="OMA" id="VPMNWTE"/>
<dbReference type="OrthoDB" id="6123450at2759"/>
<dbReference type="Proteomes" id="UP000000763">
    <property type="component" value="Chromosome 12"/>
</dbReference>
<dbReference type="Proteomes" id="UP000059680">
    <property type="component" value="Chromosome 12"/>
</dbReference>
<dbReference type="ExpressionAtlas" id="Q2QTC2">
    <property type="expression patterns" value="baseline and differential"/>
</dbReference>
<dbReference type="GO" id="GO:0009507">
    <property type="term" value="C:chloroplast"/>
    <property type="evidence" value="ECO:0007669"/>
    <property type="project" value="UniProtKB-SubCell"/>
</dbReference>
<dbReference type="GO" id="GO:0005524">
    <property type="term" value="F:ATP binding"/>
    <property type="evidence" value="ECO:0007669"/>
    <property type="project" value="UniProtKB-KW"/>
</dbReference>
<dbReference type="GO" id="GO:0019200">
    <property type="term" value="F:carbohydrate kinase activity"/>
    <property type="evidence" value="ECO:0007669"/>
    <property type="project" value="EnsemblPlants"/>
</dbReference>
<dbReference type="GO" id="GO:0046872">
    <property type="term" value="F:metal ion binding"/>
    <property type="evidence" value="ECO:0007669"/>
    <property type="project" value="UniProtKB-KW"/>
</dbReference>
<dbReference type="GO" id="GO:0051752">
    <property type="term" value="F:phosphoglucan, water dikinase activity"/>
    <property type="evidence" value="ECO:0007669"/>
    <property type="project" value="UniProtKB-EC"/>
</dbReference>
<dbReference type="GO" id="GO:2001070">
    <property type="term" value="F:starch binding"/>
    <property type="evidence" value="ECO:0007669"/>
    <property type="project" value="InterPro"/>
</dbReference>
<dbReference type="GO" id="GO:0005982">
    <property type="term" value="P:starch metabolic process"/>
    <property type="evidence" value="ECO:0007669"/>
    <property type="project" value="EnsemblPlants"/>
</dbReference>
<dbReference type="CDD" id="cd05818">
    <property type="entry name" value="CBM20_water_dikinase"/>
    <property type="match status" value="1"/>
</dbReference>
<dbReference type="Gene3D" id="3.30.1490.20">
    <property type="entry name" value="ATP-grasp fold, A domain"/>
    <property type="match status" value="1"/>
</dbReference>
<dbReference type="Gene3D" id="3.30.470.20">
    <property type="entry name" value="ATP-grasp fold, B domain"/>
    <property type="match status" value="1"/>
</dbReference>
<dbReference type="Gene3D" id="2.60.40.10">
    <property type="entry name" value="Immunoglobulins"/>
    <property type="match status" value="1"/>
</dbReference>
<dbReference type="InterPro" id="IPR013815">
    <property type="entry name" value="ATP_grasp_subdomain_1"/>
</dbReference>
<dbReference type="InterPro" id="IPR013784">
    <property type="entry name" value="Carb-bd-like_fold"/>
</dbReference>
<dbReference type="InterPro" id="IPR002044">
    <property type="entry name" value="CBM20"/>
</dbReference>
<dbReference type="InterPro" id="IPR034848">
    <property type="entry name" value="CBM20_water_dikinase"/>
</dbReference>
<dbReference type="InterPro" id="IPR054481">
    <property type="entry name" value="GWD1_pHisD"/>
</dbReference>
<dbReference type="InterPro" id="IPR013783">
    <property type="entry name" value="Ig-like_fold"/>
</dbReference>
<dbReference type="InterPro" id="IPR002192">
    <property type="entry name" value="PPDK_AMP/ATP-bd"/>
</dbReference>
<dbReference type="PANTHER" id="PTHR47453">
    <property type="entry name" value="PHOSPHOGLUCAN, WATER DIKINASE, CHLOROPLASTIC"/>
    <property type="match status" value="1"/>
</dbReference>
<dbReference type="PANTHER" id="PTHR47453:SF1">
    <property type="entry name" value="PHOSPHOGLUCAN, WATER DIKINASE, CHLOROPLASTIC"/>
    <property type="match status" value="1"/>
</dbReference>
<dbReference type="Pfam" id="PF00686">
    <property type="entry name" value="CBM_20"/>
    <property type="match status" value="1"/>
</dbReference>
<dbReference type="Pfam" id="PF22973">
    <property type="entry name" value="GWD1_pHisD"/>
    <property type="match status" value="1"/>
</dbReference>
<dbReference type="Pfam" id="PF01326">
    <property type="entry name" value="PPDK_N"/>
    <property type="match status" value="1"/>
</dbReference>
<dbReference type="SMART" id="SM01065">
    <property type="entry name" value="CBM_2"/>
    <property type="match status" value="1"/>
</dbReference>
<dbReference type="SUPFAM" id="SSF56059">
    <property type="entry name" value="Glutathione synthetase ATP-binding domain-like"/>
    <property type="match status" value="1"/>
</dbReference>
<dbReference type="SUPFAM" id="SSF49452">
    <property type="entry name" value="Starch-binding domain-like"/>
    <property type="match status" value="1"/>
</dbReference>
<dbReference type="PROSITE" id="PS51166">
    <property type="entry name" value="CBM20"/>
    <property type="match status" value="1"/>
</dbReference>
<name>PWD_ORYSJ</name>